<proteinExistence type="evidence at protein level"/>
<keyword id="KW-1064">Adaptive immunity</keyword>
<keyword id="KW-1003">Cell membrane</keyword>
<keyword id="KW-0903">Direct protein sequencing</keyword>
<keyword id="KW-1015">Disulfide bond</keyword>
<keyword id="KW-0391">Immunity</keyword>
<keyword id="KW-1280">Immunoglobulin</keyword>
<keyword id="KW-0393">Immunoglobulin domain</keyword>
<keyword id="KW-0472">Membrane</keyword>
<keyword id="KW-1267">Proteomics identification</keyword>
<keyword id="KW-0873">Pyrrolidone carboxylic acid</keyword>
<keyword id="KW-1185">Reference proteome</keyword>
<keyword id="KW-0964">Secreted</keyword>
<keyword id="KW-0732">Signal</keyword>
<name>LV140_HUMAN</name>
<dbReference type="EMBL" id="AC245291">
    <property type="status" value="NOT_ANNOTATED_CDS"/>
    <property type="molecule type" value="Genomic_DNA"/>
</dbReference>
<dbReference type="PIR" id="A01968">
    <property type="entry name" value="L1HUNM"/>
</dbReference>
<dbReference type="EMDB" id="EMD-24195"/>
<dbReference type="EMDB" id="EMD-24347"/>
<dbReference type="EMDB" id="EMD-24365"/>
<dbReference type="EMDB" id="EMD-25167"/>
<dbReference type="EMDB" id="EMD-26202"/>
<dbReference type="EMDB" id="EMD-26964"/>
<dbReference type="EMDB" id="EMD-27419"/>
<dbReference type="EMDB" id="EMD-27637"/>
<dbReference type="EMDB" id="EMD-27638"/>
<dbReference type="EMDB" id="EMD-28728"/>
<dbReference type="EMDB" id="EMD-30895"/>
<dbReference type="EMDB" id="EMD-32734"/>
<dbReference type="EMDB" id="EMD-33667"/>
<dbReference type="EMDB" id="EMD-33668"/>
<dbReference type="EMDB" id="EMD-33820"/>
<dbReference type="EMDB" id="EMD-33822"/>
<dbReference type="EMDB" id="EMD-38915"/>
<dbReference type="EMDB" id="EMD-41467"/>
<dbReference type="EMDB" id="EMD-43260"/>
<dbReference type="EMDB" id="EMD-44666"/>
<dbReference type="SMR" id="P01703"/>
<dbReference type="FunCoup" id="P01703">
    <property type="interactions" value="436"/>
</dbReference>
<dbReference type="IntAct" id="P01703">
    <property type="interactions" value="1"/>
</dbReference>
<dbReference type="IMGT_GENE-DB" id="IGLV1-40"/>
<dbReference type="BioMuta" id="IGLV1-40"/>
<dbReference type="DMDM" id="126545"/>
<dbReference type="jPOST" id="P01703"/>
<dbReference type="MassIVE" id="P01703"/>
<dbReference type="Ensembl" id="ENST00000390299.2">
    <property type="protein sequence ID" value="ENSP00000374834.2"/>
    <property type="gene ID" value="ENSG00000211653.2"/>
</dbReference>
<dbReference type="Ensembl" id="ENST00000610349.2">
    <property type="protein sequence ID" value="ENSP00000479659.2"/>
    <property type="gene ID" value="ENSG00000274575.2"/>
</dbReference>
<dbReference type="UCSC" id="uc062cbv.1">
    <property type="organism name" value="human"/>
</dbReference>
<dbReference type="AGR" id="HGNC:5877"/>
<dbReference type="GeneCards" id="IGLV1-40"/>
<dbReference type="HGNC" id="HGNC:5877">
    <property type="gene designation" value="IGLV1-40"/>
</dbReference>
<dbReference type="HPA" id="ENSG00000211653">
    <property type="expression patterns" value="Tissue enhanced (lymphoid tissue, stomach)"/>
</dbReference>
<dbReference type="neXtProt" id="NX_P01703"/>
<dbReference type="OpenTargets" id="ENSG00000211653"/>
<dbReference type="VEuPathDB" id="HostDB:ENSG00000211653"/>
<dbReference type="GeneTree" id="ENSGT00940000154293"/>
<dbReference type="InParanoid" id="P01703"/>
<dbReference type="OMA" id="WIVLIRS"/>
<dbReference type="OrthoDB" id="9838202at2759"/>
<dbReference type="PAN-GO" id="P01703">
    <property type="GO annotations" value="3 GO annotations based on evolutionary models"/>
</dbReference>
<dbReference type="PathwayCommons" id="P01703"/>
<dbReference type="Reactome" id="R-HSA-166663">
    <property type="pathway name" value="Initial triggering of complement"/>
</dbReference>
<dbReference type="Reactome" id="R-HSA-173623">
    <property type="pathway name" value="Classical antibody-mediated complement activation"/>
</dbReference>
<dbReference type="Reactome" id="R-HSA-198933">
    <property type="pathway name" value="Immunoregulatory interactions between a Lymphoid and a non-Lymphoid cell"/>
</dbReference>
<dbReference type="Reactome" id="R-HSA-202733">
    <property type="pathway name" value="Cell surface interactions at the vascular wall"/>
</dbReference>
<dbReference type="Reactome" id="R-HSA-2029481">
    <property type="pathway name" value="FCGR activation"/>
</dbReference>
<dbReference type="Reactome" id="R-HSA-2029482">
    <property type="pathway name" value="Regulation of actin dynamics for phagocytic cup formation"/>
</dbReference>
<dbReference type="Reactome" id="R-HSA-2029485">
    <property type="pathway name" value="Role of phospholipids in phagocytosis"/>
</dbReference>
<dbReference type="Reactome" id="R-HSA-2168880">
    <property type="pathway name" value="Scavenging of heme from plasma"/>
</dbReference>
<dbReference type="Reactome" id="R-HSA-2454202">
    <property type="pathway name" value="Fc epsilon receptor (FCERI) signaling"/>
</dbReference>
<dbReference type="Reactome" id="R-HSA-2730905">
    <property type="pathway name" value="Role of LAT2/NTAL/LAB on calcium mobilization"/>
</dbReference>
<dbReference type="Reactome" id="R-HSA-2871796">
    <property type="pathway name" value="FCERI mediated MAPK activation"/>
</dbReference>
<dbReference type="Reactome" id="R-HSA-2871809">
    <property type="pathway name" value="FCERI mediated Ca+2 mobilization"/>
</dbReference>
<dbReference type="Reactome" id="R-HSA-2871837">
    <property type="pathway name" value="FCERI mediated NF-kB activation"/>
</dbReference>
<dbReference type="Reactome" id="R-HSA-5690714">
    <property type="pathway name" value="CD22 mediated BCR regulation"/>
</dbReference>
<dbReference type="Reactome" id="R-HSA-9664323">
    <property type="pathway name" value="FCGR3A-mediated IL10 synthesis"/>
</dbReference>
<dbReference type="Reactome" id="R-HSA-9664422">
    <property type="pathway name" value="FCGR3A-mediated phagocytosis"/>
</dbReference>
<dbReference type="Reactome" id="R-HSA-9679191">
    <property type="pathway name" value="Potential therapeutics for SARS"/>
</dbReference>
<dbReference type="Reactome" id="R-HSA-977606">
    <property type="pathway name" value="Regulation of Complement cascade"/>
</dbReference>
<dbReference type="Reactome" id="R-HSA-983695">
    <property type="pathway name" value="Antigen activates B Cell Receptor (BCR) leading to generation of second messengers"/>
</dbReference>
<dbReference type="SignaLink" id="P01703"/>
<dbReference type="ChiTaRS" id="IGLV1-40">
    <property type="organism name" value="human"/>
</dbReference>
<dbReference type="Pharos" id="P01703">
    <property type="development level" value="Tdark"/>
</dbReference>
<dbReference type="PRO" id="PR:P01703"/>
<dbReference type="Proteomes" id="UP000005640">
    <property type="component" value="Chromosome 22"/>
</dbReference>
<dbReference type="RNAct" id="P01703">
    <property type="molecule type" value="protein"/>
</dbReference>
<dbReference type="Bgee" id="ENSG00000211653">
    <property type="expression patterns" value="Expressed in duodenum and 89 other cell types or tissues"/>
</dbReference>
<dbReference type="GO" id="GO:0005576">
    <property type="term" value="C:extracellular region"/>
    <property type="evidence" value="ECO:0000304"/>
    <property type="project" value="Reactome"/>
</dbReference>
<dbReference type="GO" id="GO:0019814">
    <property type="term" value="C:immunoglobulin complex"/>
    <property type="evidence" value="ECO:0000318"/>
    <property type="project" value="GO_Central"/>
</dbReference>
<dbReference type="GO" id="GO:0005886">
    <property type="term" value="C:plasma membrane"/>
    <property type="evidence" value="ECO:0000304"/>
    <property type="project" value="Reactome"/>
</dbReference>
<dbReference type="GO" id="GO:0003823">
    <property type="term" value="F:antigen binding"/>
    <property type="evidence" value="ECO:0000303"/>
    <property type="project" value="UniProtKB"/>
</dbReference>
<dbReference type="GO" id="GO:0002250">
    <property type="term" value="P:adaptive immune response"/>
    <property type="evidence" value="ECO:0007669"/>
    <property type="project" value="UniProtKB-KW"/>
</dbReference>
<dbReference type="GO" id="GO:0006955">
    <property type="term" value="P:immune response"/>
    <property type="evidence" value="ECO:0000318"/>
    <property type="project" value="GO_Central"/>
</dbReference>
<dbReference type="FunFam" id="2.60.40.10:FF:000442">
    <property type="entry name" value="Immunoglobulin lambda variable 2-8"/>
    <property type="match status" value="1"/>
</dbReference>
<dbReference type="Gene3D" id="2.60.40.10">
    <property type="entry name" value="Immunoglobulins"/>
    <property type="match status" value="1"/>
</dbReference>
<dbReference type="InterPro" id="IPR007110">
    <property type="entry name" value="Ig-like_dom"/>
</dbReference>
<dbReference type="InterPro" id="IPR036179">
    <property type="entry name" value="Ig-like_dom_sf"/>
</dbReference>
<dbReference type="InterPro" id="IPR013783">
    <property type="entry name" value="Ig-like_fold"/>
</dbReference>
<dbReference type="InterPro" id="IPR003599">
    <property type="entry name" value="Ig_sub"/>
</dbReference>
<dbReference type="InterPro" id="IPR013106">
    <property type="entry name" value="Ig_V-set"/>
</dbReference>
<dbReference type="InterPro" id="IPR050150">
    <property type="entry name" value="IgV_Light_Chain"/>
</dbReference>
<dbReference type="PANTHER" id="PTHR23267">
    <property type="entry name" value="IMMUNOGLOBULIN LIGHT CHAIN"/>
    <property type="match status" value="1"/>
</dbReference>
<dbReference type="Pfam" id="PF07686">
    <property type="entry name" value="V-set"/>
    <property type="match status" value="1"/>
</dbReference>
<dbReference type="SMART" id="SM00409">
    <property type="entry name" value="IG"/>
    <property type="match status" value="1"/>
</dbReference>
<dbReference type="SMART" id="SM00406">
    <property type="entry name" value="IGv"/>
    <property type="match status" value="1"/>
</dbReference>
<dbReference type="SUPFAM" id="SSF48726">
    <property type="entry name" value="Immunoglobulin"/>
    <property type="match status" value="1"/>
</dbReference>
<dbReference type="PROSITE" id="PS50835">
    <property type="entry name" value="IG_LIKE"/>
    <property type="match status" value="1"/>
</dbReference>
<protein>
    <recommendedName>
        <fullName evidence="4 9">Immunoglobulin lambda variable 1-40</fullName>
    </recommendedName>
    <alternativeName>
        <fullName evidence="11">Ig lambda chain V-I region NEWM</fullName>
    </alternativeName>
</protein>
<evidence type="ECO:0000250" key="1">
    <source>
        <dbReference type="UniProtKB" id="P01721"/>
    </source>
</evidence>
<evidence type="ECO:0000255" key="2">
    <source>
        <dbReference type="PROSITE-ProRule" id="PRU00114"/>
    </source>
</evidence>
<evidence type="ECO:0000269" key="3">
    <source>
    </source>
</evidence>
<evidence type="ECO:0000303" key="4">
    <source>
    </source>
</evidence>
<evidence type="ECO:0000303" key="5">
    <source>
    </source>
</evidence>
<evidence type="ECO:0000303" key="6">
    <source>
    </source>
</evidence>
<evidence type="ECO:0000303" key="7">
    <source>
    </source>
</evidence>
<evidence type="ECO:0000303" key="8">
    <source>
    </source>
</evidence>
<evidence type="ECO:0000303" key="9">
    <source ref="4"/>
</evidence>
<evidence type="ECO:0000305" key="10"/>
<evidence type="ECO:0000305" key="11">
    <source>
    </source>
</evidence>
<organism>
    <name type="scientific">Homo sapiens</name>
    <name type="common">Human</name>
    <dbReference type="NCBI Taxonomy" id="9606"/>
    <lineage>
        <taxon>Eukaryota</taxon>
        <taxon>Metazoa</taxon>
        <taxon>Chordata</taxon>
        <taxon>Craniata</taxon>
        <taxon>Vertebrata</taxon>
        <taxon>Euteleostomi</taxon>
        <taxon>Mammalia</taxon>
        <taxon>Eutheria</taxon>
        <taxon>Euarchontoglires</taxon>
        <taxon>Primates</taxon>
        <taxon>Haplorrhini</taxon>
        <taxon>Catarrhini</taxon>
        <taxon>Hominidae</taxon>
        <taxon>Homo</taxon>
    </lineage>
</organism>
<comment type="function">
    <text evidence="5 6 7 8">V region of the variable domain of immunoglobulin light chains that participates in the antigen recognition (PubMed:24600447). Immunoglobulins, also known as antibodies, are membrane-bound or secreted glycoproteins produced by B lymphocytes. In the recognition phase of humoral immunity, the membrane-bound immunoglobulins serve as receptors which, upon binding of a specific antigen, trigger the clonal expansion and differentiation of B lymphocytes into immunoglobulins-secreting plasma cells. Secreted immunoglobulins mediate the effector phase of humoral immunity, which results in the elimination of bound antigens (PubMed:20176268, PubMed:22158414). The antigen binding site is formed by the variable domain of one heavy chain, together with that of its associated light chain. Thus, each immunoglobulin has two antigen binding sites with remarkable affinity for a particular antigen. The variable domains are assembled by a process called V-(D)-J rearrangement and can then be subjected to somatic hypermutations which, after exposure to antigen and selection, allow affinity maturation for a particular antigen (PubMed:17576170, PubMed:20176268).</text>
</comment>
<comment type="subunit">
    <text evidence="6">Immunoglobulins are composed of two identical heavy chains and two identical light chains; disulfide-linked.</text>
</comment>
<comment type="subcellular location">
    <subcellularLocation>
        <location evidence="6 7">Secreted</location>
    </subcellularLocation>
    <subcellularLocation>
        <location evidence="6 7">Cell membrane</location>
    </subcellularLocation>
</comment>
<comment type="polymorphism">
    <text>There are several alleles. The sequence shown is that of IMGT allele IGLV1-40*01.</text>
</comment>
<comment type="caution">
    <text evidence="10">For an example of a full-length immunoglobulin lambda light chain see AC P0DOX8.</text>
</comment>
<feature type="signal peptide" evidence="3">
    <location>
        <begin position="1"/>
        <end position="19"/>
    </location>
</feature>
<feature type="chain" id="PRO_0000059826" description="Immunoglobulin lambda variable 1-40" evidence="3">
    <location>
        <begin position="20"/>
        <end position="118"/>
    </location>
</feature>
<feature type="domain" description="Ig-like" evidence="2">
    <location>
        <begin position="20"/>
        <end position="118" status="greater than"/>
    </location>
</feature>
<feature type="region of interest" description="Framework-1" evidence="1">
    <location>
        <begin position="20"/>
        <end position="44"/>
    </location>
</feature>
<feature type="region of interest" description="Complementarity-determining-1" evidence="1">
    <location>
        <begin position="45"/>
        <end position="53"/>
    </location>
</feature>
<feature type="region of interest" description="Framework-2" evidence="1">
    <location>
        <begin position="54"/>
        <end position="70"/>
    </location>
</feature>
<feature type="region of interest" description="Complementarity-determining-2" evidence="1">
    <location>
        <begin position="71"/>
        <end position="73"/>
    </location>
</feature>
<feature type="region of interest" description="Framework-3" evidence="1">
    <location>
        <begin position="74"/>
        <end position="109"/>
    </location>
</feature>
<feature type="region of interest" description="Complementarity-determining-3" evidence="1">
    <location>
        <begin position="110"/>
        <end position="118" status="greater than"/>
    </location>
</feature>
<feature type="modified residue" description="Pyrrolidone carboxylic acid" evidence="3">
    <location>
        <position position="20"/>
    </location>
</feature>
<feature type="disulfide bond" evidence="2">
    <location>
        <begin position="41"/>
        <end position="109"/>
    </location>
</feature>
<feature type="sequence conflict" description="In Ref. 2; AA sequence." evidence="10" ref="2">
    <original>YDVH</original>
    <variation>NHVK</variation>
    <location>
        <begin position="52"/>
        <end position="55"/>
    </location>
</feature>
<feature type="sequence conflict" description="In Ref. 2; AA sequence." evidence="10" ref="2">
    <original>YGNSNRPSGVPD</original>
    <variation>FHNNA</variation>
    <location>
        <begin position="70"/>
        <end position="81"/>
    </location>
</feature>
<feature type="sequence conflict" description="In Ref. 2; AA sequence." evidence="10" ref="2">
    <original>G</original>
    <variation>V</variation>
    <location>
        <position position="85"/>
    </location>
</feature>
<feature type="sequence conflict" description="In Ref. 2; AA sequence." evidence="10" ref="2">
    <original>T</original>
    <variation>S</variation>
    <location>
        <position position="90"/>
    </location>
</feature>
<feature type="sequence conflict" description="In Ref. 2; AA sequence." evidence="10" ref="2">
    <original>S</original>
    <variation>T</variation>
    <location>
        <position position="93"/>
    </location>
</feature>
<feature type="sequence conflict" description="In Ref. 2; AA sequence." evidence="10" ref="2">
    <original>S</original>
    <variation>R</variation>
    <location>
        <position position="114"/>
    </location>
</feature>
<feature type="sequence conflict" description="In Ref. 2; AA sequence." evidence="10" ref="2">
    <original>SG</original>
    <variation>RV</variation>
    <location>
        <begin position="117"/>
        <end position="118"/>
    </location>
</feature>
<feature type="non-terminal residue">
    <location>
        <position position="118"/>
    </location>
</feature>
<sequence length="118" mass="12302">MAWSPLLLTLLAHCTGSWAQSVLTQPPSVSGAPGQRVTISCTGSSSNIGAGYDVHWYQQLPGTAPKLLIYGNSNRPSGVPDRFSGSKSGTSASLAITGLQAEDEADYYCQSYDSSLSG</sequence>
<gene>
    <name evidence="4 9" type="primary">IGLV1-40</name>
</gene>
<reference key="1">
    <citation type="journal article" date="1999" name="Nature">
        <title>The DNA sequence of human chromosome 22.</title>
        <authorList>
            <person name="Dunham I."/>
            <person name="Hunt A.R."/>
            <person name="Collins J.E."/>
            <person name="Bruskiewich R."/>
            <person name="Beare D.M."/>
            <person name="Clamp M."/>
            <person name="Smink L.J."/>
            <person name="Ainscough R."/>
            <person name="Almeida J.P."/>
            <person name="Babbage A.K."/>
            <person name="Bagguley C."/>
            <person name="Bailey J."/>
            <person name="Barlow K.F."/>
            <person name="Bates K.N."/>
            <person name="Beasley O.P."/>
            <person name="Bird C.P."/>
            <person name="Blakey S.E."/>
            <person name="Bridgeman A.M."/>
            <person name="Buck D."/>
            <person name="Burgess J."/>
            <person name="Burrill W.D."/>
            <person name="Burton J."/>
            <person name="Carder C."/>
            <person name="Carter N.P."/>
            <person name="Chen Y."/>
            <person name="Clark G."/>
            <person name="Clegg S.M."/>
            <person name="Cobley V.E."/>
            <person name="Cole C.G."/>
            <person name="Collier R.E."/>
            <person name="Connor R."/>
            <person name="Conroy D."/>
            <person name="Corby N.R."/>
            <person name="Coville G.J."/>
            <person name="Cox A.V."/>
            <person name="Davis J."/>
            <person name="Dawson E."/>
            <person name="Dhami P.D."/>
            <person name="Dockree C."/>
            <person name="Dodsworth S.J."/>
            <person name="Durbin R.M."/>
            <person name="Ellington A.G."/>
            <person name="Evans K.L."/>
            <person name="Fey J.M."/>
            <person name="Fleming K."/>
            <person name="French L."/>
            <person name="Garner A.A."/>
            <person name="Gilbert J.G.R."/>
            <person name="Goward M.E."/>
            <person name="Grafham D.V."/>
            <person name="Griffiths M.N.D."/>
            <person name="Hall C."/>
            <person name="Hall R.E."/>
            <person name="Hall-Tamlyn G."/>
            <person name="Heathcott R.W."/>
            <person name="Ho S."/>
            <person name="Holmes S."/>
            <person name="Hunt S.E."/>
            <person name="Jones M.C."/>
            <person name="Kershaw J."/>
            <person name="Kimberley A.M."/>
            <person name="King A."/>
            <person name="Laird G.K."/>
            <person name="Langford C.F."/>
            <person name="Leversha M.A."/>
            <person name="Lloyd C."/>
            <person name="Lloyd D.M."/>
            <person name="Martyn I.D."/>
            <person name="Mashreghi-Mohammadi M."/>
            <person name="Matthews L.H."/>
            <person name="Mccann O.T."/>
            <person name="Mcclay J."/>
            <person name="Mclaren S."/>
            <person name="McMurray A.A."/>
            <person name="Milne S.A."/>
            <person name="Mortimore B.J."/>
            <person name="Odell C.N."/>
            <person name="Pavitt R."/>
            <person name="Pearce A.V."/>
            <person name="Pearson D."/>
            <person name="Phillimore B.J.C.T."/>
            <person name="Phillips S.H."/>
            <person name="Plumb R.W."/>
            <person name="Ramsay H."/>
            <person name="Ramsey Y."/>
            <person name="Rogers L."/>
            <person name="Ross M.T."/>
            <person name="Scott C.E."/>
            <person name="Sehra H.K."/>
            <person name="Skuce C.D."/>
            <person name="Smalley S."/>
            <person name="Smith M.L."/>
            <person name="Soderlund C."/>
            <person name="Spragon L."/>
            <person name="Steward C.A."/>
            <person name="Sulston J.E."/>
            <person name="Swann R.M."/>
            <person name="Vaudin M."/>
            <person name="Wall M."/>
            <person name="Wallis J.M."/>
            <person name="Whiteley M.N."/>
            <person name="Willey D.L."/>
            <person name="Williams L."/>
            <person name="Williams S.A."/>
            <person name="Williamson H."/>
            <person name="Wilmer T.E."/>
            <person name="Wilming L."/>
            <person name="Wright C.L."/>
            <person name="Hubbard T."/>
            <person name="Bentley D.R."/>
            <person name="Beck S."/>
            <person name="Rogers J."/>
            <person name="Shimizu N."/>
            <person name="Minoshima S."/>
            <person name="Kawasaki K."/>
            <person name="Sasaki T."/>
            <person name="Asakawa S."/>
            <person name="Kudoh J."/>
            <person name="Shintani A."/>
            <person name="Shibuya K."/>
            <person name="Yoshizaki Y."/>
            <person name="Aoki N."/>
            <person name="Mitsuyama S."/>
            <person name="Roe B.A."/>
            <person name="Chen F."/>
            <person name="Chu L."/>
            <person name="Crabtree J."/>
            <person name="Deschamps S."/>
            <person name="Do A."/>
            <person name="Do T."/>
            <person name="Dorman A."/>
            <person name="Fang F."/>
            <person name="Fu Y."/>
            <person name="Hu P."/>
            <person name="Hua A."/>
            <person name="Kenton S."/>
            <person name="Lai H."/>
            <person name="Lao H.I."/>
            <person name="Lewis J."/>
            <person name="Lewis S."/>
            <person name="Lin S.-P."/>
            <person name="Loh P."/>
            <person name="Malaj E."/>
            <person name="Nguyen T."/>
            <person name="Pan H."/>
            <person name="Phan S."/>
            <person name="Qi S."/>
            <person name="Qian Y."/>
            <person name="Ray L."/>
            <person name="Ren Q."/>
            <person name="Shaull S."/>
            <person name="Sloan D."/>
            <person name="Song L."/>
            <person name="Wang Q."/>
            <person name="Wang Y."/>
            <person name="Wang Z."/>
            <person name="White J."/>
            <person name="Willingham D."/>
            <person name="Wu H."/>
            <person name="Yao Z."/>
            <person name="Zhan M."/>
            <person name="Zhang G."/>
            <person name="Chissoe S."/>
            <person name="Murray J."/>
            <person name="Miller N."/>
            <person name="Minx P."/>
            <person name="Fulton R."/>
            <person name="Johnson D."/>
            <person name="Bemis G."/>
            <person name="Bentley D."/>
            <person name="Bradshaw H."/>
            <person name="Bourne S."/>
            <person name="Cordes M."/>
            <person name="Du Z."/>
            <person name="Fulton L."/>
            <person name="Goela D."/>
            <person name="Graves T."/>
            <person name="Hawkins J."/>
            <person name="Hinds K."/>
            <person name="Kemp K."/>
            <person name="Latreille P."/>
            <person name="Layman D."/>
            <person name="Ozersky P."/>
            <person name="Rohlfing T."/>
            <person name="Scheet P."/>
            <person name="Walker C."/>
            <person name="Wamsley A."/>
            <person name="Wohldmann P."/>
            <person name="Pepin K."/>
            <person name="Nelson J."/>
            <person name="Korf I."/>
            <person name="Bedell J.A."/>
            <person name="Hillier L.W."/>
            <person name="Mardis E."/>
            <person name="Waterston R."/>
            <person name="Wilson R."/>
            <person name="Emanuel B.S."/>
            <person name="Shaikh T."/>
            <person name="Kurahashi H."/>
            <person name="Saitta S."/>
            <person name="Budarf M.L."/>
            <person name="McDermid H.E."/>
            <person name="Johnson A."/>
            <person name="Wong A.C.C."/>
            <person name="Morrow B.E."/>
            <person name="Edelmann L."/>
            <person name="Kim U.J."/>
            <person name="Shizuya H."/>
            <person name="Simon M.I."/>
            <person name="Dumanski J.P."/>
            <person name="Peyrard M."/>
            <person name="Kedra D."/>
            <person name="Seroussi E."/>
            <person name="Fransson I."/>
            <person name="Tapia I."/>
            <person name="Bruder C.E."/>
            <person name="O'Brien K.P."/>
            <person name="Wilkinson P."/>
            <person name="Bodenteich A."/>
            <person name="Hartman K."/>
            <person name="Hu X."/>
            <person name="Khan A.S."/>
            <person name="Lane L."/>
            <person name="Tilahun Y."/>
            <person name="Wright H."/>
        </authorList>
    </citation>
    <scope>NUCLEOTIDE SEQUENCE [LARGE SCALE GENOMIC DNA] (IMGT ALLELE IGLV1-40*01)</scope>
</reference>
<reference key="2">
    <citation type="journal article" date="1974" name="Biochemistry">
        <title>Amino acid sequence of the (lambda) light chain of a human myeloma immunoglobulin (IgG New).</title>
        <authorList>
            <person name="Chen B.L."/>
            <person name="Poljak R.J."/>
        </authorList>
    </citation>
    <scope>PROTEIN SEQUENCE OF 20-118</scope>
    <scope>PYROGLUTAMATE FORMATION AT GLN-20</scope>
</reference>
<reference key="3">
    <citation type="journal article" date="2001" name="Exp. Clin. Immunogenet.">
        <title>Nomenclature of the human immunoglobulin lambda (IGL) genes.</title>
        <authorList>
            <person name="Lefranc M.P."/>
        </authorList>
    </citation>
    <scope>NOMENCLATURE</scope>
</reference>
<reference key="4">
    <citation type="book" date="2001" name="The Immunoglobulin FactsBook.">
        <title>The Immunoglobulin FactsBook.</title>
        <editorList>
            <person name="Lefranc M.P."/>
            <person name="Lefranc G."/>
        </editorList>
        <authorList>
            <person name="Lefranc M.P."/>
            <person name="Lefranc G."/>
        </authorList>
    </citation>
    <scope>NOMENCLATURE</scope>
</reference>
<reference key="5">
    <citation type="journal article" date="2007" name="Annu. Rev. Genet.">
        <title>Immunoglobulin somatic hypermutation.</title>
        <authorList>
            <person name="Teng G."/>
            <person name="Papavasiliou F.N."/>
        </authorList>
    </citation>
    <scope>REVIEW ON SOMATIC HYPERMUTATION</scope>
</reference>
<reference key="6">
    <citation type="journal article" date="2010" name="J. Allergy Clin. Immunol.">
        <title>Structure and function of immunoglobulins.</title>
        <authorList>
            <person name="Schroeder H.W. Jr."/>
            <person name="Cavacini L."/>
        </authorList>
    </citation>
    <scope>REVIEW ON IMMUNOGLOBULINS</scope>
</reference>
<reference key="7">
    <citation type="journal article" date="2012" name="Nat. Rev. Immunol.">
        <title>Molecular programming of B cell memory.</title>
        <authorList>
            <person name="McHeyzer-Williams M."/>
            <person name="Okitsu S."/>
            <person name="Wang N."/>
            <person name="McHeyzer-Williams L."/>
        </authorList>
    </citation>
    <scope>REVIEW ON FUNCTION</scope>
</reference>
<reference key="8">
    <citation type="journal article" date="2014" name="Front. Immunol.">
        <title>Immunoglobulin and T Cell Receptor Genes: IMGT((R)) and the Birth and Rise of Immunoinformatics.</title>
        <authorList>
            <person name="Lefranc M.P."/>
        </authorList>
    </citation>
    <scope>NOMENCLATURE</scope>
</reference>
<accession>P01703</accession>
<accession>A0A075B6J0</accession>